<proteinExistence type="inferred from homology"/>
<sequence>MTKPIVAIVGKPNVGKSTIFNRVVGERISIVEDTPGVTRDRIYSSGEWLTHEFNIIDTGGIEIGDAPFQTQIRAQAEIAIEEADVIIFMVNVREGLTQSDEMVAQMLYKSKKPVVLAVNKVDNLEMRNDIYDFYSLGFGDPYPISGSHGLGLGDLLDAVVENFNKESEDPYDEDTIRLSIIGRPNVGKSSLVNAILGEERVIVSNVAGTTRDAIDTEYSYDGQDYVLIDTAGMRKKGKVYESTEKYSVLRALKAIERSEVVLVVIDAEQGIIEQDKRVAGYAHEEGKAIVIVVNKWDTVEKDSKTMKKFTDDVRNEFQFLDYAQIAFVSAKEGLRLKTLFPYINQASENHKKRVQSSTLNEVVTDAISMNPTPTDKGRRLNVFYTTQVAIEPPTFVVFVNDVELMHFSYRRYLENQIRNAFGFEGTPIHIIPRKRN</sequence>
<keyword id="KW-0342">GTP-binding</keyword>
<keyword id="KW-0547">Nucleotide-binding</keyword>
<keyword id="KW-1185">Reference proteome</keyword>
<keyword id="KW-0677">Repeat</keyword>
<keyword id="KW-0690">Ribosome biogenesis</keyword>
<protein>
    <recommendedName>
        <fullName evidence="1">GTPase Der</fullName>
    </recommendedName>
    <alternativeName>
        <fullName evidence="1">GTP-binding protein EngA</fullName>
    </alternativeName>
</protein>
<organism>
    <name type="scientific">Staphylococcus epidermidis (strain ATCC 35984 / DSM 28319 / BCRC 17069 / CCUG 31568 / BM 3577 / RP62A)</name>
    <dbReference type="NCBI Taxonomy" id="176279"/>
    <lineage>
        <taxon>Bacteria</taxon>
        <taxon>Bacillati</taxon>
        <taxon>Bacillota</taxon>
        <taxon>Bacilli</taxon>
        <taxon>Bacillales</taxon>
        <taxon>Staphylococcaceae</taxon>
        <taxon>Staphylococcus</taxon>
    </lineage>
</organism>
<feature type="chain" id="PRO_0000179049" description="GTPase Der">
    <location>
        <begin position="1"/>
        <end position="436"/>
    </location>
</feature>
<feature type="domain" description="EngA-type G 1">
    <location>
        <begin position="4"/>
        <end position="167"/>
    </location>
</feature>
<feature type="domain" description="EngA-type G 2">
    <location>
        <begin position="176"/>
        <end position="351"/>
    </location>
</feature>
<feature type="domain" description="KH-like" evidence="1">
    <location>
        <begin position="352"/>
        <end position="436"/>
    </location>
</feature>
<feature type="binding site" evidence="1">
    <location>
        <begin position="10"/>
        <end position="17"/>
    </location>
    <ligand>
        <name>GTP</name>
        <dbReference type="ChEBI" id="CHEBI:37565"/>
        <label>1</label>
    </ligand>
</feature>
<feature type="binding site" evidence="1">
    <location>
        <begin position="57"/>
        <end position="61"/>
    </location>
    <ligand>
        <name>GTP</name>
        <dbReference type="ChEBI" id="CHEBI:37565"/>
        <label>1</label>
    </ligand>
</feature>
<feature type="binding site" evidence="1">
    <location>
        <begin position="119"/>
        <end position="122"/>
    </location>
    <ligand>
        <name>GTP</name>
        <dbReference type="ChEBI" id="CHEBI:37565"/>
        <label>1</label>
    </ligand>
</feature>
<feature type="binding site" evidence="1">
    <location>
        <begin position="182"/>
        <end position="189"/>
    </location>
    <ligand>
        <name>GTP</name>
        <dbReference type="ChEBI" id="CHEBI:37565"/>
        <label>2</label>
    </ligand>
</feature>
<feature type="binding site" evidence="1">
    <location>
        <begin position="229"/>
        <end position="233"/>
    </location>
    <ligand>
        <name>GTP</name>
        <dbReference type="ChEBI" id="CHEBI:37565"/>
        <label>2</label>
    </ligand>
</feature>
<feature type="binding site" evidence="1">
    <location>
        <begin position="294"/>
        <end position="297"/>
    </location>
    <ligand>
        <name>GTP</name>
        <dbReference type="ChEBI" id="CHEBI:37565"/>
        <label>2</label>
    </ligand>
</feature>
<reference key="1">
    <citation type="journal article" date="2005" name="J. Bacteriol.">
        <title>Insights on evolution of virulence and resistance from the complete genome analysis of an early methicillin-resistant Staphylococcus aureus strain and a biofilm-producing methicillin-resistant Staphylococcus epidermidis strain.</title>
        <authorList>
            <person name="Gill S.R."/>
            <person name="Fouts D.E."/>
            <person name="Archer G.L."/>
            <person name="Mongodin E.F."/>
            <person name="DeBoy R.T."/>
            <person name="Ravel J."/>
            <person name="Paulsen I.T."/>
            <person name="Kolonay J.F."/>
            <person name="Brinkac L.M."/>
            <person name="Beanan M.J."/>
            <person name="Dodson R.J."/>
            <person name="Daugherty S.C."/>
            <person name="Madupu R."/>
            <person name="Angiuoli S.V."/>
            <person name="Durkin A.S."/>
            <person name="Haft D.H."/>
            <person name="Vamathevan J.J."/>
            <person name="Khouri H."/>
            <person name="Utterback T.R."/>
            <person name="Lee C."/>
            <person name="Dimitrov G."/>
            <person name="Jiang L."/>
            <person name="Qin H."/>
            <person name="Weidman J."/>
            <person name="Tran K."/>
            <person name="Kang K.H."/>
            <person name="Hance I.R."/>
            <person name="Nelson K.E."/>
            <person name="Fraser C.M."/>
        </authorList>
    </citation>
    <scope>NUCLEOTIDE SEQUENCE [LARGE SCALE GENOMIC DNA]</scope>
    <source>
        <strain>ATCC 35984 / DSM 28319 / BCRC 17069 / CCUG 31568 / BM 3577 / RP62A</strain>
    </source>
</reference>
<dbReference type="EMBL" id="CP000029">
    <property type="protein sequence ID" value="AAW54448.1"/>
    <property type="molecule type" value="Genomic_DNA"/>
</dbReference>
<dbReference type="RefSeq" id="WP_001831042.1">
    <property type="nucleotide sequence ID" value="NC_002976.3"/>
</dbReference>
<dbReference type="SMR" id="Q5HP70"/>
<dbReference type="STRING" id="176279.SERP1043"/>
<dbReference type="GeneID" id="50018716"/>
<dbReference type="KEGG" id="ser:SERP1043"/>
<dbReference type="eggNOG" id="COG1160">
    <property type="taxonomic scope" value="Bacteria"/>
</dbReference>
<dbReference type="HOGENOM" id="CLU_016077_6_2_9"/>
<dbReference type="Proteomes" id="UP000000531">
    <property type="component" value="Chromosome"/>
</dbReference>
<dbReference type="GO" id="GO:0005525">
    <property type="term" value="F:GTP binding"/>
    <property type="evidence" value="ECO:0007669"/>
    <property type="project" value="UniProtKB-UniRule"/>
</dbReference>
<dbReference type="GO" id="GO:0043022">
    <property type="term" value="F:ribosome binding"/>
    <property type="evidence" value="ECO:0007669"/>
    <property type="project" value="TreeGrafter"/>
</dbReference>
<dbReference type="GO" id="GO:0042254">
    <property type="term" value="P:ribosome biogenesis"/>
    <property type="evidence" value="ECO:0007669"/>
    <property type="project" value="UniProtKB-KW"/>
</dbReference>
<dbReference type="CDD" id="cd01894">
    <property type="entry name" value="EngA1"/>
    <property type="match status" value="1"/>
</dbReference>
<dbReference type="CDD" id="cd01895">
    <property type="entry name" value="EngA2"/>
    <property type="match status" value="1"/>
</dbReference>
<dbReference type="FunFam" id="3.30.300.20:FF:000004">
    <property type="entry name" value="GTPase Der"/>
    <property type="match status" value="1"/>
</dbReference>
<dbReference type="FunFam" id="3.40.50.300:FF:000040">
    <property type="entry name" value="GTPase Der"/>
    <property type="match status" value="1"/>
</dbReference>
<dbReference type="FunFam" id="3.40.50.300:FF:000057">
    <property type="entry name" value="GTPase Der"/>
    <property type="match status" value="1"/>
</dbReference>
<dbReference type="Gene3D" id="3.30.300.20">
    <property type="match status" value="1"/>
</dbReference>
<dbReference type="Gene3D" id="3.40.50.300">
    <property type="entry name" value="P-loop containing nucleotide triphosphate hydrolases"/>
    <property type="match status" value="2"/>
</dbReference>
<dbReference type="HAMAP" id="MF_00195">
    <property type="entry name" value="GTPase_Der"/>
    <property type="match status" value="1"/>
</dbReference>
<dbReference type="InterPro" id="IPR031166">
    <property type="entry name" value="G_ENGA"/>
</dbReference>
<dbReference type="InterPro" id="IPR006073">
    <property type="entry name" value="GTP-bd"/>
</dbReference>
<dbReference type="InterPro" id="IPR016484">
    <property type="entry name" value="GTPase_Der"/>
</dbReference>
<dbReference type="InterPro" id="IPR032859">
    <property type="entry name" value="KH_dom-like"/>
</dbReference>
<dbReference type="InterPro" id="IPR015946">
    <property type="entry name" value="KH_dom-like_a/b"/>
</dbReference>
<dbReference type="InterPro" id="IPR027417">
    <property type="entry name" value="P-loop_NTPase"/>
</dbReference>
<dbReference type="InterPro" id="IPR005225">
    <property type="entry name" value="Small_GTP-bd"/>
</dbReference>
<dbReference type="NCBIfam" id="TIGR03594">
    <property type="entry name" value="GTPase_EngA"/>
    <property type="match status" value="1"/>
</dbReference>
<dbReference type="NCBIfam" id="TIGR00231">
    <property type="entry name" value="small_GTP"/>
    <property type="match status" value="2"/>
</dbReference>
<dbReference type="PANTHER" id="PTHR43834">
    <property type="entry name" value="GTPASE DER"/>
    <property type="match status" value="1"/>
</dbReference>
<dbReference type="PANTHER" id="PTHR43834:SF6">
    <property type="entry name" value="GTPASE DER"/>
    <property type="match status" value="1"/>
</dbReference>
<dbReference type="Pfam" id="PF14714">
    <property type="entry name" value="KH_dom-like"/>
    <property type="match status" value="1"/>
</dbReference>
<dbReference type="Pfam" id="PF01926">
    <property type="entry name" value="MMR_HSR1"/>
    <property type="match status" value="2"/>
</dbReference>
<dbReference type="PIRSF" id="PIRSF006485">
    <property type="entry name" value="GTP-binding_EngA"/>
    <property type="match status" value="1"/>
</dbReference>
<dbReference type="PRINTS" id="PR00326">
    <property type="entry name" value="GTP1OBG"/>
</dbReference>
<dbReference type="SUPFAM" id="SSF52540">
    <property type="entry name" value="P-loop containing nucleoside triphosphate hydrolases"/>
    <property type="match status" value="2"/>
</dbReference>
<dbReference type="PROSITE" id="PS51712">
    <property type="entry name" value="G_ENGA"/>
    <property type="match status" value="2"/>
</dbReference>
<accession>Q5HP70</accession>
<gene>
    <name evidence="1" type="primary">der</name>
    <name type="synonym">engA</name>
    <name type="ordered locus">SERP1043</name>
</gene>
<evidence type="ECO:0000255" key="1">
    <source>
        <dbReference type="HAMAP-Rule" id="MF_00195"/>
    </source>
</evidence>
<name>DER_STAEQ</name>
<comment type="function">
    <text evidence="1">GTPase that plays an essential role in the late steps of ribosome biogenesis.</text>
</comment>
<comment type="subunit">
    <text evidence="1">Associates with the 50S ribosomal subunit.</text>
</comment>
<comment type="similarity">
    <text evidence="1">Belongs to the TRAFAC class TrmE-Era-EngA-EngB-Septin-like GTPase superfamily. EngA (Der) GTPase family.</text>
</comment>